<protein>
    <recommendedName>
        <fullName>Nucleoprotein</fullName>
        <ecNumber evidence="5">3.1.-.-</ecNumber>
    </recommendedName>
    <alternativeName>
        <fullName>Nucleocapsid protein</fullName>
        <shortName>Protein N</shortName>
    </alternativeName>
</protein>
<reference key="1">
    <citation type="journal article" date="1990" name="Virology">
        <title>Nucleotide sequence analysis of the S genomic segment of Prospect Hill virus: comparison with the prototype Hantavirus.</title>
        <authorList>
            <person name="Parrington M.A."/>
            <person name="Kang C.Y."/>
        </authorList>
    </citation>
    <scope>NUCLEOTIDE SEQUENCE [GENOMIC RNA]</scope>
    <source>
        <strain>PHV-1</strain>
    </source>
</reference>
<keyword id="KW-0167">Capsid protein</keyword>
<keyword id="KW-0143">Chaperone</keyword>
<keyword id="KW-0175">Coiled coil</keyword>
<keyword id="KW-0255">Endonuclease</keyword>
<keyword id="KW-1139">Helical capsid protein</keyword>
<keyword id="KW-1035">Host cytoplasm</keyword>
<keyword id="KW-1040">Host Golgi apparatus</keyword>
<keyword id="KW-0378">Hydrolase</keyword>
<keyword id="KW-0540">Nuclease</keyword>
<keyword id="KW-0687">Ribonucleoprotein</keyword>
<keyword id="KW-0694">RNA-binding</keyword>
<keyword id="KW-0543">Viral nucleoprotein</keyword>
<keyword id="KW-0946">Virion</keyword>
<comment type="function">
    <text evidence="1 2 5 7">Encapsidates the genome protecting it from nucleases (Probable). The encapsidated genomic RNA is termed the nucleocapsid (NC) and serves as template for transcription and replication (Probable). The nucleocapsid has a left-handed helical structure (By similarity). As a trimer, specifically binds and acts as a chaperone to unwind the panhandle structure formed by the viral RNA (vRNA) termini (By similarity). Involved in the transcription and replication initiation of vRNA by mediating primer annealing (By similarity). Plays a role in cap snatching by sequestering capped RNAs in P bodies for use by the viral RdRp during transcription initiation (By similarity). Substitutes for the cellular cap-binding complex (eIF4F) to preferentially facilitate the translation of capped mRNAs (By similarity). Initiates the translation by specifically binding to the cap and 40S ribosomal subunit (By similarity). Prevents the viral glycoprotein N (Gn) from autophagy-dependent breakdown maybe by blocking autophagosome formation (By similarity). Inhibits host EIF2AK2/PKR dimerization to prevent PKR-induced translational shutdown in cells and thus the activation of the antiviral state (By similarity). Also displays sequence-unspecific DNA endonuclease activity (By similarity).</text>
</comment>
<comment type="subunit">
    <text evidence="2 3 4 5">Homotrimer (By similarity). Homomultimer (By similarity). Homomultimerizes and binds to viral genomic RNA to form the nucleocapsid (By similarity). Interacts with host MAP1LC3B; this interaction participates to the protection of Gn from virus-triggered autophagy (By similarity). Interacts with host SNAP29; this interaction participates to the protection of glycoprotein N from virus-triggered autophagy (By similarity). Interacts (via N-terminus) with host RPS19; this interaction probably mediates the loading of the 40S ribosomal subunit on viral capped mRNA during N-mediated translation initiation (By similarity). Interacts with the viral RdRp (By similarity). Interacts with host SUMO1 (via N-terminus) (By similarity). Interacts with host DAXX (By similarity). Interacts with the viral glycoprotein N (via C-terminus) (By similarity). Interacts with the viral glycoprotein C (via C-terminus) (By similarity).</text>
</comment>
<comment type="subcellular location">
    <subcellularLocation>
        <location evidence="2">Virion</location>
    </subcellularLocation>
    <subcellularLocation>
        <location evidence="2">Host cytoplasm</location>
        <location evidence="2">Host perinuclear region</location>
    </subcellularLocation>
    <subcellularLocation>
        <location evidence="2">Host Golgi apparatus</location>
        <location evidence="2">Host cis-Golgi network</location>
    </subcellularLocation>
    <text evidence="2">Internal protein of virus particle.</text>
</comment>
<comment type="domain">
    <text evidence="2 5">The N-terminus is required for chaperone activity and, in trimeric form, this region likely serves in high affinity vRNA panhandle recognition (By similarity). The N-terminus also contains a coiled coil region, which probably participates in but is insufficient to initiate N trimerization (By similarity). The YxxL motif is indispensable for the interaction with host MAP1LC3B (By similarity). The central region is involved in specific RNA-binding (By similarity). Has distinct cap- and RNA-binding sites so it can bind simultaneously both the vRNA and mRNA cap (By similarity).</text>
</comment>
<comment type="similarity">
    <text evidence="7">Belongs to the hantavirus nucleocapsid protein family.</text>
</comment>
<name>NCAP_PHV</name>
<gene>
    <name type="primary">N</name>
</gene>
<dbReference type="EC" id="3.1.-.-" evidence="5"/>
<dbReference type="EMBL" id="M34011">
    <property type="protein sequence ID" value="AAA47086.1"/>
    <property type="molecule type" value="Genomic_RNA"/>
</dbReference>
<dbReference type="PIR" id="A34681">
    <property type="entry name" value="VHVUPH"/>
</dbReference>
<dbReference type="SMR" id="P22047"/>
<dbReference type="GO" id="GO:0019029">
    <property type="term" value="C:helical viral capsid"/>
    <property type="evidence" value="ECO:0007669"/>
    <property type="project" value="UniProtKB-KW"/>
</dbReference>
<dbReference type="GO" id="GO:0044177">
    <property type="term" value="C:host cell Golgi apparatus"/>
    <property type="evidence" value="ECO:0007669"/>
    <property type="project" value="UniProtKB-SubCell"/>
</dbReference>
<dbReference type="GO" id="GO:0044220">
    <property type="term" value="C:host cell perinuclear region of cytoplasm"/>
    <property type="evidence" value="ECO:0007669"/>
    <property type="project" value="UniProtKB-SubCell"/>
</dbReference>
<dbReference type="GO" id="GO:1990904">
    <property type="term" value="C:ribonucleoprotein complex"/>
    <property type="evidence" value="ECO:0007669"/>
    <property type="project" value="UniProtKB-KW"/>
</dbReference>
<dbReference type="GO" id="GO:0019013">
    <property type="term" value="C:viral nucleocapsid"/>
    <property type="evidence" value="ECO:0007669"/>
    <property type="project" value="UniProtKB-KW"/>
</dbReference>
<dbReference type="GO" id="GO:0004519">
    <property type="term" value="F:endonuclease activity"/>
    <property type="evidence" value="ECO:0007669"/>
    <property type="project" value="UniProtKB-KW"/>
</dbReference>
<dbReference type="GO" id="GO:0003723">
    <property type="term" value="F:RNA binding"/>
    <property type="evidence" value="ECO:0007669"/>
    <property type="project" value="UniProtKB-KW"/>
</dbReference>
<dbReference type="Gene3D" id="1.20.58.90">
    <property type="match status" value="1"/>
</dbReference>
<dbReference type="InterPro" id="IPR002214">
    <property type="entry name" value="Hanta_nucleocap"/>
</dbReference>
<dbReference type="Pfam" id="PF00846">
    <property type="entry name" value="Hanta_nucleocap"/>
    <property type="match status" value="1"/>
</dbReference>
<dbReference type="PIRSF" id="PIRSF003949">
    <property type="entry name" value="N_HantaV"/>
    <property type="match status" value="1"/>
</dbReference>
<dbReference type="SUPFAM" id="SSF46596">
    <property type="entry name" value="Eukaryotic DNA topoisomerase I, dispensable insert domain"/>
    <property type="match status" value="1"/>
</dbReference>
<sequence>MSQLREIQEEITRHEQQLVIARQKLKEAERTVEVDPDDVNKSTLQSRRSAVSTLEDKLAEFKRQLADVISRQKMDEKPVDPTGIELDDHLKERSSLQYGNVLDVNSIDIEEPSGQTADWLKIGSYIIEFALPIILKALHMLSTRGRQTVKENKGTRIRFKDDSSYEDVNGIRRPKHLYVSMPTAQSTMKAEELTPGRFRTIVCGLFPAQIMARNIISPVMGVIGFAFFVKDWADKVKAFLDQKCPFLKAEPRPGQPAGEAEFLSSIRAYLMNRQAVLDETHLPDIDALVELAASGDPTLPDSLENPHAAWVFACAPDRCPPTCIYIAGMAELGAFFAILQDMRNTIMASKTVGTAEEKLKKKSAFYQSYLRRTQSMGIQLDQRIILMYMIEWGNEVVNHFHLGDDMDPELRQLAQALIDQKVKEISNQEPLKI</sequence>
<evidence type="ECO:0000250" key="1">
    <source>
        <dbReference type="UniProtKB" id="O36307"/>
    </source>
</evidence>
<evidence type="ECO:0000250" key="2">
    <source>
        <dbReference type="UniProtKB" id="P05133"/>
    </source>
</evidence>
<evidence type="ECO:0000250" key="3">
    <source>
        <dbReference type="UniProtKB" id="P27313"/>
    </source>
</evidence>
<evidence type="ECO:0000250" key="4">
    <source>
        <dbReference type="UniProtKB" id="Q88918"/>
    </source>
</evidence>
<evidence type="ECO:0000250" key="5">
    <source>
        <dbReference type="UniProtKB" id="Q89462"/>
    </source>
</evidence>
<evidence type="ECO:0000255" key="6"/>
<evidence type="ECO:0000305" key="7"/>
<organismHost>
    <name type="scientific">Microtus pennsylvanicus</name>
    <name type="common">Meadow vole</name>
    <dbReference type="NCBI Taxonomy" id="10058"/>
</organismHost>
<organism>
    <name type="scientific">Prospect Hill virus</name>
    <name type="common">PHV</name>
    <dbReference type="NCBI Taxonomy" id="3052492"/>
    <lineage>
        <taxon>Viruses</taxon>
        <taxon>Riboviria</taxon>
        <taxon>Orthornavirae</taxon>
        <taxon>Negarnaviricota</taxon>
        <taxon>Polyploviricotina</taxon>
        <taxon>Ellioviricetes</taxon>
        <taxon>Bunyavirales</taxon>
        <taxon>Hantaviridae</taxon>
        <taxon>Mammantavirinae</taxon>
        <taxon>Orthohantavirus</taxon>
    </lineage>
</organism>
<accession>P22047</accession>
<proteinExistence type="inferred from homology"/>
<feature type="chain" id="PRO_0000222010" description="Nucleoprotein">
    <location>
        <begin position="1"/>
        <end position="433"/>
    </location>
</feature>
<feature type="region of interest" description="Viral panhandle binding" evidence="5">
    <location>
        <begin position="1"/>
        <end position="175"/>
    </location>
</feature>
<feature type="region of interest" description="Chaperone activity" evidence="5">
    <location>
        <begin position="1"/>
        <end position="100"/>
    </location>
</feature>
<feature type="region of interest" description="Homomultimerization" evidence="4">
    <location>
        <begin position="1"/>
        <end position="79"/>
    </location>
</feature>
<feature type="region of interest" description="RdRP binding" evidence="5">
    <location>
        <begin position="1"/>
        <end position="50"/>
    </location>
</feature>
<feature type="region of interest" description="Interaction with glycoprotein N" evidence="4">
    <location>
        <begin position="80"/>
        <end position="248"/>
    </location>
</feature>
<feature type="region of interest" description="Homomultimerization" evidence="2">
    <location>
        <begin position="100"/>
        <end position="125"/>
    </location>
</feature>
<feature type="region of interest" description="Interaction with host RPS19" evidence="5">
    <location>
        <begin position="150"/>
        <end position="175"/>
    </location>
</feature>
<feature type="region of interest" description="Viral RNA-binding" evidence="2">
    <location>
        <begin position="175"/>
        <end position="217"/>
    </location>
</feature>
<feature type="region of interest" description="Interaction with host UBE2I/UBC9" evidence="2">
    <location>
        <begin position="188"/>
        <end position="191"/>
    </location>
</feature>
<feature type="region of interest" description="Interaction with host DAXX" evidence="3">
    <location>
        <begin position="377"/>
        <end position="433"/>
    </location>
</feature>
<feature type="region of interest" description="Homomultimerization" evidence="4">
    <location>
        <begin position="377"/>
        <end position="425"/>
    </location>
</feature>
<feature type="coiled-coil region" evidence="6">
    <location>
        <begin position="4"/>
        <end position="71"/>
    </location>
</feature>
<feature type="short sequence motif" description="YxxL" evidence="2">
    <location>
        <begin position="178"/>
        <end position="181"/>
    </location>
</feature>
<feature type="site" description="Important for the endonuclease activity" evidence="5">
    <location>
        <position position="88"/>
    </location>
</feature>
<feature type="site" description="Important for the endonuclease activity" evidence="5">
    <location>
        <position position="103"/>
    </location>
</feature>
<feature type="sequence conflict" description="In Ref. 1; AAA47086." evidence="7" ref="1">
    <original>I</original>
    <variation>T</variation>
    <location>
        <position position="7"/>
    </location>
</feature>